<comment type="function">
    <text evidence="1">Together with the chaperonin GroEL, plays an essential role in assisting protein folding. The GroEL-GroES system forms a nano-cage that allows encapsulation of the non-native substrate proteins and provides a physical environment optimized to promote and accelerate protein folding. GroES binds to the apical surface of the GroEL ring, thereby capping the opening of the GroEL channel.</text>
</comment>
<comment type="subunit">
    <text evidence="1">Heptamer of 7 subunits arranged in a ring. Interacts with the chaperonin GroEL.</text>
</comment>
<comment type="subcellular location">
    <subcellularLocation>
        <location evidence="1">Cytoplasm</location>
    </subcellularLocation>
</comment>
<comment type="similarity">
    <text evidence="1 2">Belongs to the GroES chaperonin family.</text>
</comment>
<feature type="chain" id="PRO_0000174732" description="Co-chaperonin GroES">
    <location>
        <begin position="1"/>
        <end position="102"/>
    </location>
</feature>
<sequence length="102" mass="11183">MSDQATTLKIKPLGDRILVKREEEASTARGGIILPDTAKKKQDRAEVLALGTGKKDDKGQQLPFEVQVGDIVLIDKYSGQELTVEGEEYVIVQMSEVIAVLQ</sequence>
<protein>
    <recommendedName>
        <fullName evidence="1">Co-chaperonin GroES</fullName>
    </recommendedName>
    <alternativeName>
        <fullName evidence="1">10 kDa chaperonin</fullName>
    </alternativeName>
    <alternativeName>
        <fullName>11.2 kDa stress response protein</fullName>
    </alternativeName>
    <alternativeName>
        <fullName evidence="1">Chaperonin-10</fullName>
        <shortName evidence="1">Cpn10</shortName>
    </alternativeName>
    <alternativeName>
        <fullName>Heat shock protein 10</fullName>
        <shortName>HSP10</shortName>
    </alternativeName>
</protein>
<evidence type="ECO:0000255" key="1">
    <source>
        <dbReference type="HAMAP-Rule" id="MF_00580"/>
    </source>
</evidence>
<evidence type="ECO:0000305" key="2"/>
<gene>
    <name evidence="1" type="primary">groES</name>
    <name evidence="1" type="synonym">groS</name>
    <name type="synonym">hypA</name>
    <name type="ordered locus">CTA_0118</name>
</gene>
<organism>
    <name type="scientific">Chlamydia trachomatis serovar A (strain ATCC VR-571B / DSM 19440 / HAR-13)</name>
    <dbReference type="NCBI Taxonomy" id="315277"/>
    <lineage>
        <taxon>Bacteria</taxon>
        <taxon>Pseudomonadati</taxon>
        <taxon>Chlamydiota</taxon>
        <taxon>Chlamydiia</taxon>
        <taxon>Chlamydiales</taxon>
        <taxon>Chlamydiaceae</taxon>
        <taxon>Chlamydia/Chlamydophila group</taxon>
        <taxon>Chlamydia</taxon>
    </lineage>
</organism>
<dbReference type="EMBL" id="M31739">
    <property type="protein sequence ID" value="AAA03203.1"/>
    <property type="molecule type" value="Unassigned_DNA"/>
</dbReference>
<dbReference type="EMBL" id="CP000051">
    <property type="protein sequence ID" value="AAX50364.1"/>
    <property type="molecule type" value="Genomic_DNA"/>
</dbReference>
<dbReference type="PIR" id="B60273">
    <property type="entry name" value="B60273"/>
</dbReference>
<dbReference type="RefSeq" id="WP_009872382.1">
    <property type="nucleotide sequence ID" value="NC_007429.1"/>
</dbReference>
<dbReference type="SMR" id="Q3KMQ8"/>
<dbReference type="KEGG" id="cta:CTA_0118"/>
<dbReference type="HOGENOM" id="CLU_132825_2_1_0"/>
<dbReference type="Proteomes" id="UP000002532">
    <property type="component" value="Chromosome"/>
</dbReference>
<dbReference type="GO" id="GO:0005737">
    <property type="term" value="C:cytoplasm"/>
    <property type="evidence" value="ECO:0007669"/>
    <property type="project" value="UniProtKB-SubCell"/>
</dbReference>
<dbReference type="GO" id="GO:0005524">
    <property type="term" value="F:ATP binding"/>
    <property type="evidence" value="ECO:0007669"/>
    <property type="project" value="InterPro"/>
</dbReference>
<dbReference type="GO" id="GO:0046872">
    <property type="term" value="F:metal ion binding"/>
    <property type="evidence" value="ECO:0007669"/>
    <property type="project" value="TreeGrafter"/>
</dbReference>
<dbReference type="GO" id="GO:0044183">
    <property type="term" value="F:protein folding chaperone"/>
    <property type="evidence" value="ECO:0007669"/>
    <property type="project" value="InterPro"/>
</dbReference>
<dbReference type="GO" id="GO:0051087">
    <property type="term" value="F:protein-folding chaperone binding"/>
    <property type="evidence" value="ECO:0007669"/>
    <property type="project" value="TreeGrafter"/>
</dbReference>
<dbReference type="GO" id="GO:0051082">
    <property type="term" value="F:unfolded protein binding"/>
    <property type="evidence" value="ECO:0007669"/>
    <property type="project" value="TreeGrafter"/>
</dbReference>
<dbReference type="GO" id="GO:0051085">
    <property type="term" value="P:chaperone cofactor-dependent protein refolding"/>
    <property type="evidence" value="ECO:0007669"/>
    <property type="project" value="TreeGrafter"/>
</dbReference>
<dbReference type="CDD" id="cd00320">
    <property type="entry name" value="cpn10"/>
    <property type="match status" value="1"/>
</dbReference>
<dbReference type="FunFam" id="2.30.33.40:FF:000007">
    <property type="entry name" value="10 kDa chaperonin"/>
    <property type="match status" value="1"/>
</dbReference>
<dbReference type="Gene3D" id="2.30.33.40">
    <property type="entry name" value="GroES chaperonin"/>
    <property type="match status" value="1"/>
</dbReference>
<dbReference type="HAMAP" id="MF_00580">
    <property type="entry name" value="CH10"/>
    <property type="match status" value="1"/>
</dbReference>
<dbReference type="InterPro" id="IPR020818">
    <property type="entry name" value="Chaperonin_GroES"/>
</dbReference>
<dbReference type="InterPro" id="IPR037124">
    <property type="entry name" value="Chaperonin_GroES_sf"/>
</dbReference>
<dbReference type="InterPro" id="IPR018369">
    <property type="entry name" value="Chaprnonin_Cpn10_CS"/>
</dbReference>
<dbReference type="InterPro" id="IPR011032">
    <property type="entry name" value="GroES-like_sf"/>
</dbReference>
<dbReference type="NCBIfam" id="NF001531">
    <property type="entry name" value="PRK00364.2-2"/>
    <property type="match status" value="1"/>
</dbReference>
<dbReference type="NCBIfam" id="NF001533">
    <property type="entry name" value="PRK00364.2-4"/>
    <property type="match status" value="1"/>
</dbReference>
<dbReference type="PANTHER" id="PTHR10772">
    <property type="entry name" value="10 KDA HEAT SHOCK PROTEIN"/>
    <property type="match status" value="1"/>
</dbReference>
<dbReference type="PANTHER" id="PTHR10772:SF58">
    <property type="entry name" value="CO-CHAPERONIN GROES"/>
    <property type="match status" value="1"/>
</dbReference>
<dbReference type="Pfam" id="PF00166">
    <property type="entry name" value="Cpn10"/>
    <property type="match status" value="1"/>
</dbReference>
<dbReference type="PRINTS" id="PR00297">
    <property type="entry name" value="CHAPERONIN10"/>
</dbReference>
<dbReference type="SMART" id="SM00883">
    <property type="entry name" value="Cpn10"/>
    <property type="match status" value="1"/>
</dbReference>
<dbReference type="SUPFAM" id="SSF50129">
    <property type="entry name" value="GroES-like"/>
    <property type="match status" value="1"/>
</dbReference>
<dbReference type="PROSITE" id="PS00681">
    <property type="entry name" value="CHAPERONINS_CPN10"/>
    <property type="match status" value="1"/>
</dbReference>
<accession>Q3KMQ8</accession>
<accession>O84113</accession>
<keyword id="KW-0143">Chaperone</keyword>
<keyword id="KW-0963">Cytoplasm</keyword>
<keyword id="KW-0346">Stress response</keyword>
<name>CH10_CHLTA</name>
<proteinExistence type="inferred from homology"/>
<reference key="1">
    <citation type="journal article" date="1990" name="Infect. Immun.">
        <title>The Chlamydia trachomatis hyp operon is homologous to the groE stress response operon of Escherichia coli.</title>
        <authorList>
            <person name="Morrison R.P."/>
            <person name="Su H."/>
            <person name="Lyng K."/>
            <person name="Yuan Y."/>
        </authorList>
    </citation>
    <scope>NUCLEOTIDE SEQUENCE [GENOMIC DNA]</scope>
</reference>
<reference key="2">
    <citation type="journal article" date="2005" name="Infect. Immun.">
        <title>Comparative genomic analysis of Chlamydia trachomatis oculotropic and genitotropic strains.</title>
        <authorList>
            <person name="Carlson J.H."/>
            <person name="Porcella S.F."/>
            <person name="McClarty G."/>
            <person name="Caldwell H.D."/>
        </authorList>
    </citation>
    <scope>NUCLEOTIDE SEQUENCE [LARGE SCALE GENOMIC DNA]</scope>
    <source>
        <strain>ATCC VR-571B / DSM 19440 / HAR-13</strain>
    </source>
</reference>